<organism>
    <name type="scientific">Gymnopilus junonius</name>
    <name type="common">Spectacular rustgill mushroom</name>
    <name type="synonym">Gymnopilus spectabilis subsp. junonius</name>
    <dbReference type="NCBI Taxonomy" id="109634"/>
    <lineage>
        <taxon>Eukaryota</taxon>
        <taxon>Fungi</taxon>
        <taxon>Dikarya</taxon>
        <taxon>Basidiomycota</taxon>
        <taxon>Agaricomycotina</taxon>
        <taxon>Agaricomycetes</taxon>
        <taxon>Agaricomycetidae</taxon>
        <taxon>Agaricales</taxon>
        <taxon>Agaricineae</taxon>
        <taxon>Hymenogastraceae</taxon>
        <taxon>Gymnopilus</taxon>
    </lineage>
</organism>
<accession>P9WEN0</accession>
<reference key="1">
    <citation type="journal article" date="2019" name="J. Am. Chem. Soc.">
        <title>Distinct autocatalytic alpha-N-methylating precursors expand the borosin RiPP family of peptide natural products.</title>
        <authorList>
            <person name="Quijano M.R."/>
            <person name="Zach C."/>
            <person name="Miller F.S."/>
            <person name="Lee A.R."/>
            <person name="Imani A.S."/>
            <person name="Kuenzler M."/>
            <person name="Freeman M.F."/>
        </authorList>
    </citation>
    <scope>FUNCTION</scope>
    <scope>CATALYTIC ACTIVITY</scope>
    <scope>DOMAIN</scope>
    <scope>METHYLATION AT SER-408; ALA-409; VAL-410; ILE-411; ILE-412; ALA-413; ALA-414; ILE-415 AND ILE-416</scope>
</reference>
<dbReference type="EC" id="2.1.1.-" evidence="3"/>
<dbReference type="SMR" id="P9WEN0"/>
<dbReference type="iPTMnet" id="P9WEN0"/>
<dbReference type="GO" id="GO:0008168">
    <property type="term" value="F:methyltransferase activity"/>
    <property type="evidence" value="ECO:0007669"/>
    <property type="project" value="UniProtKB-KW"/>
</dbReference>
<dbReference type="GO" id="GO:0032259">
    <property type="term" value="P:methylation"/>
    <property type="evidence" value="ECO:0007669"/>
    <property type="project" value="UniProtKB-KW"/>
</dbReference>
<dbReference type="CDD" id="cd19916">
    <property type="entry name" value="OphMA_like"/>
    <property type="match status" value="1"/>
</dbReference>
<dbReference type="Gene3D" id="3.40.1010.10">
    <property type="entry name" value="Cobalt-precorrin-4 Transmethylase, Domain 1"/>
    <property type="match status" value="1"/>
</dbReference>
<dbReference type="InterPro" id="IPR000878">
    <property type="entry name" value="4pyrrol_Mease"/>
</dbReference>
<dbReference type="InterPro" id="IPR035996">
    <property type="entry name" value="4pyrrol_Methylase_sf"/>
</dbReference>
<dbReference type="InterPro" id="IPR014777">
    <property type="entry name" value="4pyrrole_Mease_sub1"/>
</dbReference>
<dbReference type="Pfam" id="PF00590">
    <property type="entry name" value="TP_methylase"/>
    <property type="match status" value="1"/>
</dbReference>
<dbReference type="SUPFAM" id="SSF53790">
    <property type="entry name" value="Tetrapyrrole methylase"/>
    <property type="match status" value="1"/>
</dbReference>
<keyword id="KW-0488">Methylation</keyword>
<keyword id="KW-0489">Methyltransferase</keyword>
<keyword id="KW-0949">S-adenosyl-L-methionine</keyword>
<keyword id="KW-0808">Transferase</keyword>
<sequence length="419" mass="46108">MATPIATTTNTPTKAGSLTIAGSGIASVGHITLETLAYIKESHKVFYLVCDPVTEAFIQENGKGPCINLSIYYDSQKSRYDSYLQMCEVMLRDVRNGLDVLGVFYGHPGVFVSPSHRAIALAREEGFNAKMLAGVSAEDCLFADLEFDPASFGCMTCEASELLIRNRPLNPYIHNVIWQVGSVGVTDMTFNNNKFPILIDRLEKDFGPNHTVIHYVGRVIPQSVSKIETFTIADLRKEEVMNHFDAISTLYVPPRDISPVDPTMAEKLGPSGTRVEPIEAFRPSLKWSAQNDKRSYAYNPYESDVVAQLDNYVTPEGHRILQGSPAMKKFLITLATSPQLLQAYRENPSAIVDTVEGLNEQEKYGLKLGSEGAVYALMSRPTGDIAREKELTNDEIANNHGAPYAFVSAVIIAAIICAL</sequence>
<evidence type="ECO:0000250" key="1">
    <source>
        <dbReference type="UniProtKB" id="A0A1Q3EPD6"/>
    </source>
</evidence>
<evidence type="ECO:0000250" key="2">
    <source>
        <dbReference type="UniProtKB" id="A0A2R2JFI5"/>
    </source>
</evidence>
<evidence type="ECO:0000269" key="3">
    <source>
    </source>
</evidence>
<evidence type="ECO:0000303" key="4">
    <source>
    </source>
</evidence>
<evidence type="ECO:0000305" key="5"/>
<evidence type="ECO:0000305" key="6">
    <source>
    </source>
</evidence>
<proteinExistence type="evidence at protein level"/>
<comment type="function">
    <text evidence="2 3">Fusion protein of the methyltransferase gjuM and the type I borosin core peptide; part of the gene cluster that mediates the biosynthesis of a type I borosin, a highly methylated cyclic peptide with potent biological activities (PubMed:31117659). Type I borosins derive from the C-terminus of the fusion protein, and it is the same protein that methylates its own C-terminus using S-adenosyl methionine (SAM) (PubMed:31117659). The C-terminus is subsequently cleaved off and macrocyclized by a prolyloligopeptidase to give the final product (By similarity).</text>
</comment>
<comment type="pathway">
    <text evidence="6">Secondary metabolite biosynthesis.</text>
</comment>
<comment type="subunit">
    <text evidence="1">Homodimer.</text>
</comment>
<comment type="domain">
    <text evidence="6">Within the homodimer, the clasp domain wraps around the adjacent subunit to position the core peptide into the other subunit's active site for iterative intermolecular methylation.</text>
</comment>
<comment type="PTM">
    <text evidence="3 5">GjuMA automethylates at Ser-408, Ala-409, Val-410, Ile-411, Ile-412, Ala-413, Ala-414, Ile-415 and Ile-416 before being processed by ae prolyloligopeptidase which likely forms a peptidyl ester upon removal of the follower propeptide, which then undergoes macrocyclization with the N-terminus of the modified core peptide (PubMed:31117659). Peptide backbone alpha-N-methylations change the physicochemical properties of amide bonds to provide structural constraints and other favorable characteristics including biological membrane permeability to peptides (Probable).</text>
</comment>
<comment type="similarity">
    <text evidence="5">In the N-terminal section; belongs to the precorrin methyltransferase family.</text>
</comment>
<name>GJUMA_GYMJU</name>
<feature type="chain" id="PRO_0000458508" description="N-methyltranferase gjuM" evidence="6">
    <location>
        <begin position="1"/>
        <end position="404"/>
    </location>
</feature>
<feature type="peptide" id="PRO_0000458509" description="Ribosomally synthesized type I borosin core peptide" evidence="6">
    <location>
        <begin position="405"/>
        <end position="419"/>
    </location>
</feature>
<feature type="region of interest" description="Methyltransferase domain" evidence="2">
    <location>
        <begin position="1"/>
        <end position="255"/>
    </location>
</feature>
<feature type="region of interest" description="Clasp domain" evidence="2">
    <location>
        <begin position="256"/>
        <end position="381"/>
    </location>
</feature>
<feature type="region of interest" description="Precursor leader" evidence="2">
    <location>
        <begin position="382"/>
        <end position="404"/>
    </location>
</feature>
<feature type="active site" evidence="2">
    <location>
        <position position="79"/>
    </location>
</feature>
<feature type="active site" evidence="2">
    <location>
        <position position="83"/>
    </location>
</feature>
<feature type="active site" evidence="2">
    <location>
        <position position="105"/>
    </location>
</feature>
<feature type="binding site" evidence="2">
    <location>
        <position position="105"/>
    </location>
    <ligand>
        <name>S-adenosyl-L-methionine</name>
        <dbReference type="ChEBI" id="CHEBI:59789"/>
    </ligand>
</feature>
<feature type="binding site" evidence="2">
    <location>
        <position position="107"/>
    </location>
    <ligand>
        <name>S-adenosyl-L-methionine</name>
        <dbReference type="ChEBI" id="CHEBI:59789"/>
    </ligand>
</feature>
<feature type="binding site" evidence="2">
    <location>
        <position position="110"/>
    </location>
    <ligand>
        <name>S-adenosyl-L-methionine</name>
        <dbReference type="ChEBI" id="CHEBI:59789"/>
    </ligand>
</feature>
<feature type="binding site" evidence="2">
    <location>
        <position position="137"/>
    </location>
    <ligand>
        <name>S-adenosyl-L-methionine</name>
        <dbReference type="ChEBI" id="CHEBI:59789"/>
    </ligand>
</feature>
<feature type="binding site" evidence="2">
    <location>
        <position position="179"/>
    </location>
    <ligand>
        <name>S-adenosyl-L-methionine</name>
        <dbReference type="ChEBI" id="CHEBI:59789"/>
    </ligand>
</feature>
<feature type="binding site" evidence="2">
    <location>
        <position position="217"/>
    </location>
    <ligand>
        <name>S-adenosyl-L-methionine</name>
        <dbReference type="ChEBI" id="CHEBI:59789"/>
    </ligand>
</feature>
<feature type="binding site" evidence="2">
    <location>
        <position position="248"/>
    </location>
    <ligand>
        <name>S-adenosyl-L-methionine</name>
        <dbReference type="ChEBI" id="CHEBI:59789"/>
    </ligand>
</feature>
<feature type="binding site" evidence="2">
    <location>
        <position position="249"/>
    </location>
    <ligand>
        <name>S-adenosyl-L-methionine</name>
        <dbReference type="ChEBI" id="CHEBI:59789"/>
    </ligand>
</feature>
<feature type="modified residue" description="N-methylserine" evidence="3">
    <location>
        <position position="408"/>
    </location>
</feature>
<feature type="modified residue" description="N-methylalanine" evidence="3">
    <location>
        <position position="409"/>
    </location>
</feature>
<feature type="modified residue" description="N-methylvaline" evidence="3">
    <location>
        <position position="410"/>
    </location>
</feature>
<feature type="modified residue" description="N-methylisoleucine" evidence="3">
    <location>
        <position position="411"/>
    </location>
</feature>
<feature type="modified residue" description="N-methylisoleucine" evidence="3">
    <location>
        <position position="412"/>
    </location>
</feature>
<feature type="modified residue" description="N-methylalanine" evidence="3">
    <location>
        <position position="413"/>
    </location>
</feature>
<feature type="modified residue" description="N-methylalanine" evidence="3">
    <location>
        <position position="414"/>
    </location>
</feature>
<feature type="modified residue" description="N-methylisoleucine" evidence="3">
    <location>
        <position position="415"/>
    </location>
</feature>
<feature type="modified residue" description="N-methylisoleucine" evidence="3">
    <location>
        <position position="416"/>
    </location>
</feature>
<protein>
    <recommendedName>
        <fullName evidence="4">Methyltransferase/ribosomally synthesized type I borosin cyclic peptide precursor gjuMa</fullName>
    </recommendedName>
    <alternativeName>
        <fullName evidence="4">Type I borosin cyclic peptide biosynthesis cluster protein MA</fullName>
    </alternativeName>
    <component>
        <recommendedName>
            <fullName evidence="4">N-methyltranferase gjuM</fullName>
            <ecNumber evidence="3">2.1.1.-</ecNumber>
        </recommendedName>
    </component>
    <component>
        <recommendedName>
            <fullName evidence="4">Ribosomally synthesized type I borosin core peptide</fullName>
        </recommendedName>
    </component>
</protein>